<sequence>MSGRGKQGGKTRAKAKTRSSRAGLQFPVGRVHRLLRKGNYAERVGAGAPVYLAAVLEYLTAEILELAGNAARDNKKTRIIPRHLQLAVRNDEELNKLLGGVTIAQGGVLPNIQSVLLPKKTESAKSAKSK</sequence>
<dbReference type="EMBL" id="X03018">
    <property type="protein sequence ID" value="CAA26817.1"/>
    <property type="molecule type" value="Genomic_DNA"/>
</dbReference>
<dbReference type="EMBL" id="M21287">
    <property type="protein sequence ID" value="AAA49769.1"/>
    <property type="molecule type" value="Genomic_DNA"/>
</dbReference>
<dbReference type="EMBL" id="BC106331">
    <property type="protein sequence ID" value="AAI06332.1"/>
    <property type="molecule type" value="mRNA"/>
</dbReference>
<dbReference type="PIR" id="H24510">
    <property type="entry name" value="HSXLA1"/>
</dbReference>
<dbReference type="RefSeq" id="NP_001089684.1">
    <property type="nucleotide sequence ID" value="NM_001096215.1"/>
</dbReference>
<dbReference type="RefSeq" id="XP_041444757.1">
    <property type="nucleotide sequence ID" value="XM_041588823.1"/>
</dbReference>
<dbReference type="RefSeq" id="XP_041444763.1">
    <property type="nucleotide sequence ID" value="XM_041588829.1"/>
</dbReference>
<dbReference type="RefSeq" id="XP_041444764.1">
    <property type="nucleotide sequence ID" value="XM_041588830.1"/>
</dbReference>
<dbReference type="RefSeq" id="XP_041444779.1">
    <property type="nucleotide sequence ID" value="XM_041588845.1"/>
</dbReference>
<dbReference type="RefSeq" id="XP_041444780.1">
    <property type="nucleotide sequence ID" value="XM_041588846.1"/>
</dbReference>
<dbReference type="RefSeq" id="XP_041444794.1">
    <property type="nucleotide sequence ID" value="XM_041588860.1"/>
</dbReference>
<dbReference type="RefSeq" id="XP_041444795.1">
    <property type="nucleotide sequence ID" value="XM_041588861.1"/>
</dbReference>
<dbReference type="RefSeq" id="XP_041444796.1">
    <property type="nucleotide sequence ID" value="XM_041588862.1"/>
</dbReference>
<dbReference type="RefSeq" id="XP_041444822.1">
    <property type="nucleotide sequence ID" value="XM_041588888.1"/>
</dbReference>
<dbReference type="RefSeq" id="XP_041444823.1">
    <property type="nucleotide sequence ID" value="XM_041588889.1"/>
</dbReference>
<dbReference type="PDB" id="1AOI">
    <property type="method" value="X-ray"/>
    <property type="resolution" value="2.80 A"/>
    <property type="chains" value="C/G=5-120"/>
</dbReference>
<dbReference type="PDB" id="1KX3">
    <property type="method" value="X-ray"/>
    <property type="resolution" value="2.00 A"/>
    <property type="chains" value="C/G=2-130"/>
</dbReference>
<dbReference type="PDB" id="1KX4">
    <property type="method" value="X-ray"/>
    <property type="resolution" value="2.60 A"/>
    <property type="chains" value="C/G=2-130"/>
</dbReference>
<dbReference type="PDB" id="1KX5">
    <property type="method" value="X-ray"/>
    <property type="resolution" value="1.94 A"/>
    <property type="chains" value="C/G=2-130"/>
</dbReference>
<dbReference type="PDB" id="1M18">
    <property type="method" value="X-ray"/>
    <property type="resolution" value="2.45 A"/>
    <property type="chains" value="C/G=2-130"/>
</dbReference>
<dbReference type="PDB" id="1M19">
    <property type="method" value="X-ray"/>
    <property type="resolution" value="2.30 A"/>
    <property type="chains" value="C/G=2-130"/>
</dbReference>
<dbReference type="PDB" id="1M1A">
    <property type="method" value="X-ray"/>
    <property type="resolution" value="2.65 A"/>
    <property type="chains" value="C/G=2-130"/>
</dbReference>
<dbReference type="PDB" id="1P34">
    <property type="method" value="X-ray"/>
    <property type="resolution" value="2.70 A"/>
    <property type="chains" value="C/G=2-130"/>
</dbReference>
<dbReference type="PDB" id="1P3A">
    <property type="method" value="X-ray"/>
    <property type="resolution" value="3.00 A"/>
    <property type="chains" value="C/G=2-130"/>
</dbReference>
<dbReference type="PDB" id="1P3B">
    <property type="method" value="X-ray"/>
    <property type="resolution" value="3.00 A"/>
    <property type="chains" value="C/G=2-130"/>
</dbReference>
<dbReference type="PDB" id="1P3F">
    <property type="method" value="X-ray"/>
    <property type="resolution" value="2.90 A"/>
    <property type="chains" value="C/G=2-130"/>
</dbReference>
<dbReference type="PDB" id="1P3G">
    <property type="method" value="X-ray"/>
    <property type="resolution" value="2.70 A"/>
    <property type="chains" value="C/G=2-130"/>
</dbReference>
<dbReference type="PDB" id="1P3I">
    <property type="method" value="X-ray"/>
    <property type="resolution" value="2.30 A"/>
    <property type="chains" value="C/G=2-130"/>
</dbReference>
<dbReference type="PDB" id="1P3K">
    <property type="method" value="X-ray"/>
    <property type="resolution" value="2.90 A"/>
    <property type="chains" value="C/G=2-130"/>
</dbReference>
<dbReference type="PDB" id="1P3L">
    <property type="method" value="X-ray"/>
    <property type="resolution" value="2.40 A"/>
    <property type="chains" value="C/G=2-130"/>
</dbReference>
<dbReference type="PDB" id="1P3M">
    <property type="method" value="X-ray"/>
    <property type="resolution" value="2.90 A"/>
    <property type="chains" value="C/G=2-130"/>
</dbReference>
<dbReference type="PDB" id="1P3O">
    <property type="method" value="X-ray"/>
    <property type="resolution" value="2.75 A"/>
    <property type="chains" value="C/G=2-130"/>
</dbReference>
<dbReference type="PDB" id="1P3P">
    <property type="method" value="X-ray"/>
    <property type="resolution" value="2.70 A"/>
    <property type="chains" value="C/G=2-130"/>
</dbReference>
<dbReference type="PDB" id="1S32">
    <property type="method" value="X-ray"/>
    <property type="resolution" value="2.05 A"/>
    <property type="chains" value="C/G=2-120"/>
</dbReference>
<dbReference type="PDB" id="1ZBB">
    <property type="method" value="X-ray"/>
    <property type="resolution" value="9.00 A"/>
    <property type="chains" value="C/G/c/g=2-130"/>
</dbReference>
<dbReference type="PDB" id="1ZLA">
    <property type="method" value="X-ray"/>
    <property type="resolution" value="2.90 A"/>
    <property type="chains" value="C/G=2-130"/>
</dbReference>
<dbReference type="PDB" id="2FJ7">
    <property type="method" value="X-ray"/>
    <property type="resolution" value="3.20 A"/>
    <property type="chains" value="C/G=2-130"/>
</dbReference>
<dbReference type="PDB" id="2NZD">
    <property type="method" value="X-ray"/>
    <property type="resolution" value="2.65 A"/>
    <property type="chains" value="C/G=2-120"/>
</dbReference>
<dbReference type="PDB" id="3B6F">
    <property type="method" value="X-ray"/>
    <property type="resolution" value="3.45 A"/>
    <property type="chains" value="C/G=2-130"/>
</dbReference>
<dbReference type="PDB" id="3B6G">
    <property type="method" value="X-ray"/>
    <property type="resolution" value="3.45 A"/>
    <property type="chains" value="C/G=2-130"/>
</dbReference>
<dbReference type="PDB" id="3C1B">
    <property type="method" value="X-ray"/>
    <property type="resolution" value="2.20 A"/>
    <property type="chains" value="C/G=2-130"/>
</dbReference>
<dbReference type="PDB" id="3C1C">
    <property type="method" value="X-ray"/>
    <property type="resolution" value="3.15 A"/>
    <property type="chains" value="C/G=2-130"/>
</dbReference>
<dbReference type="PDB" id="3KUY">
    <property type="method" value="X-ray"/>
    <property type="resolution" value="2.90 A"/>
    <property type="chains" value="C/G=2-120"/>
</dbReference>
<dbReference type="PDB" id="3KWQ">
    <property type="method" value="X-ray"/>
    <property type="resolution" value="3.50 A"/>
    <property type="chains" value="C/G=15-121"/>
</dbReference>
<dbReference type="PDB" id="3LJA">
    <property type="method" value="X-ray"/>
    <property type="resolution" value="2.75 A"/>
    <property type="chains" value="C/G=2-130"/>
</dbReference>
<dbReference type="PDB" id="3MNN">
    <property type="method" value="X-ray"/>
    <property type="resolution" value="2.50 A"/>
    <property type="chains" value="C/G=2-120"/>
</dbReference>
<dbReference type="PDB" id="3O62">
    <property type="method" value="X-ray"/>
    <property type="resolution" value="3.22 A"/>
    <property type="chains" value="C/G=2-130"/>
</dbReference>
<dbReference type="PDB" id="3REH">
    <property type="method" value="X-ray"/>
    <property type="resolution" value="2.50 A"/>
    <property type="chains" value="C/G=2-130"/>
</dbReference>
<dbReference type="PDB" id="3REI">
    <property type="method" value="X-ray"/>
    <property type="resolution" value="2.65 A"/>
    <property type="chains" value="C/G=2-130"/>
</dbReference>
<dbReference type="PDB" id="3REJ">
    <property type="method" value="X-ray"/>
    <property type="resolution" value="2.55 A"/>
    <property type="chains" value="C/G=2-130"/>
</dbReference>
<dbReference type="PDB" id="3REK">
    <property type="method" value="X-ray"/>
    <property type="resolution" value="2.60 A"/>
    <property type="chains" value="C/G=2-130"/>
</dbReference>
<dbReference type="PDB" id="3REL">
    <property type="method" value="X-ray"/>
    <property type="resolution" value="2.70 A"/>
    <property type="chains" value="C/G=2-130"/>
</dbReference>
<dbReference type="PDB" id="3TU4">
    <property type="method" value="X-ray"/>
    <property type="resolution" value="3.00 A"/>
    <property type="chains" value="C/G=2-130"/>
</dbReference>
<dbReference type="PDB" id="3UT9">
    <property type="method" value="X-ray"/>
    <property type="resolution" value="2.20 A"/>
    <property type="chains" value="C/G=2-130"/>
</dbReference>
<dbReference type="PDB" id="3UTA">
    <property type="method" value="X-ray"/>
    <property type="resolution" value="2.07 A"/>
    <property type="chains" value="C/G=2-130"/>
</dbReference>
<dbReference type="PDB" id="3UTB">
    <property type="method" value="X-ray"/>
    <property type="resolution" value="2.20 A"/>
    <property type="chains" value="C/G=2-130"/>
</dbReference>
<dbReference type="PDB" id="4J8U">
    <property type="method" value="X-ray"/>
    <property type="resolution" value="2.38 A"/>
    <property type="chains" value="C/G=2-130"/>
</dbReference>
<dbReference type="PDB" id="4J8V">
    <property type="method" value="X-ray"/>
    <property type="resolution" value="2.58 A"/>
    <property type="chains" value="C/G=2-130"/>
</dbReference>
<dbReference type="PDB" id="4J8W">
    <property type="method" value="X-ray"/>
    <property type="resolution" value="2.41 A"/>
    <property type="chains" value="C/G=2-130"/>
</dbReference>
<dbReference type="PDB" id="4J8X">
    <property type="method" value="X-ray"/>
    <property type="resolution" value="2.87 A"/>
    <property type="chains" value="C/G=2-130"/>
</dbReference>
<dbReference type="PDB" id="4LD9">
    <property type="method" value="X-ray"/>
    <property type="resolution" value="3.31 A"/>
    <property type="chains" value="C/G=1-130"/>
</dbReference>
<dbReference type="PDB" id="4R8P">
    <property type="method" value="X-ray"/>
    <property type="resolution" value="3.28 A"/>
    <property type="chains" value="C/G=2-130"/>
</dbReference>
<dbReference type="PDB" id="4WU8">
    <property type="method" value="X-ray"/>
    <property type="resolution" value="2.45 A"/>
    <property type="chains" value="C/G=2-130"/>
</dbReference>
<dbReference type="PDB" id="4WU9">
    <property type="method" value="X-ray"/>
    <property type="resolution" value="2.60 A"/>
    <property type="chains" value="C/G=2-130"/>
</dbReference>
<dbReference type="PDB" id="4XUJ">
    <property type="method" value="X-ray"/>
    <property type="resolution" value="3.18 A"/>
    <property type="chains" value="C/G=2-130"/>
</dbReference>
<dbReference type="PDB" id="4XZQ">
    <property type="method" value="X-ray"/>
    <property type="resolution" value="2.40 A"/>
    <property type="chains" value="C/G=15-121"/>
</dbReference>
<dbReference type="PDB" id="4YS3">
    <property type="method" value="X-ray"/>
    <property type="resolution" value="3.00 A"/>
    <property type="chains" value="C/G=15-121"/>
</dbReference>
<dbReference type="PDB" id="4Z66">
    <property type="method" value="X-ray"/>
    <property type="resolution" value="2.50 A"/>
    <property type="chains" value="C/G=15-121"/>
</dbReference>
<dbReference type="PDB" id="4ZUX">
    <property type="method" value="X-ray"/>
    <property type="resolution" value="3.82 A"/>
    <property type="chains" value="C/G/M/Q=1-130"/>
</dbReference>
<dbReference type="PDB" id="5CP6">
    <property type="method" value="X-ray"/>
    <property type="resolution" value="2.60 A"/>
    <property type="chains" value="C/G=2-130"/>
</dbReference>
<dbReference type="PDB" id="5DNM">
    <property type="method" value="X-ray"/>
    <property type="resolution" value="2.81 A"/>
    <property type="chains" value="C/G=2-130"/>
</dbReference>
<dbReference type="PDB" id="5DNN">
    <property type="method" value="X-ray"/>
    <property type="resolution" value="2.80 A"/>
    <property type="chains" value="C/G=2-130"/>
</dbReference>
<dbReference type="PDB" id="5E5A">
    <property type="method" value="X-ray"/>
    <property type="resolution" value="2.81 A"/>
    <property type="chains" value="C/G=1-130"/>
</dbReference>
<dbReference type="PDB" id="5F99">
    <property type="method" value="X-ray"/>
    <property type="resolution" value="2.63 A"/>
    <property type="chains" value="C/G=2-130"/>
</dbReference>
<dbReference type="PDB" id="5G2E">
    <property type="method" value="X-ray"/>
    <property type="resolution" value="6.70 A"/>
    <property type="chains" value="C/G/K/O/S/W=14-119"/>
</dbReference>
<dbReference type="PDB" id="5HQ2">
    <property type="method" value="X-ray"/>
    <property type="resolution" value="4.50 A"/>
    <property type="chains" value="G=2-130"/>
</dbReference>
<dbReference type="PDB" id="5MLU">
    <property type="method" value="X-ray"/>
    <property type="resolution" value="2.80 A"/>
    <property type="chains" value="C/G=15-119"/>
</dbReference>
<dbReference type="PDB" id="5NL0">
    <property type="method" value="X-ray"/>
    <property type="resolution" value="5.40 A"/>
    <property type="chains" value="C/G/M=2-130"/>
</dbReference>
<dbReference type="PDB" id="5O9G">
    <property type="method" value="EM"/>
    <property type="resolution" value="4.80 A"/>
    <property type="chains" value="C/G=1-130"/>
</dbReference>
<dbReference type="PDB" id="5OMX">
    <property type="method" value="X-ray"/>
    <property type="resolution" value="2.32 A"/>
    <property type="chains" value="C/G=2-130"/>
</dbReference>
<dbReference type="PDB" id="5ONG">
    <property type="method" value="X-ray"/>
    <property type="resolution" value="2.80 A"/>
    <property type="chains" value="C/G=2-130"/>
</dbReference>
<dbReference type="PDB" id="5ONW">
    <property type="method" value="X-ray"/>
    <property type="resolution" value="2.80 A"/>
    <property type="chains" value="C/G=2-130"/>
</dbReference>
<dbReference type="PDB" id="5OXV">
    <property type="method" value="X-ray"/>
    <property type="resolution" value="6.72 A"/>
    <property type="chains" value="C/G/M/Q=1-130"/>
</dbReference>
<dbReference type="PDB" id="5OY7">
    <property type="method" value="X-ray"/>
    <property type="resolution" value="5.77 A"/>
    <property type="chains" value="C/G/K/O/S/W/a/e=1-130"/>
</dbReference>
<dbReference type="PDB" id="5X0X">
    <property type="method" value="EM"/>
    <property type="resolution" value="3.97 A"/>
    <property type="chains" value="C/G=1-130"/>
</dbReference>
<dbReference type="PDB" id="5X0Y">
    <property type="method" value="EM"/>
    <property type="resolution" value="4.69 A"/>
    <property type="chains" value="C/G=2-130"/>
</dbReference>
<dbReference type="PDB" id="5XF6">
    <property type="method" value="X-ray"/>
    <property type="resolution" value="2.63 A"/>
    <property type="chains" value="C/G=2-130"/>
</dbReference>
<dbReference type="PDB" id="5Z3L">
    <property type="method" value="EM"/>
    <property type="resolution" value="4.31 A"/>
    <property type="chains" value="C/G=2-130"/>
</dbReference>
<dbReference type="PDB" id="5Z3O">
    <property type="method" value="EM"/>
    <property type="resolution" value="3.62 A"/>
    <property type="chains" value="C/G=2-130"/>
</dbReference>
<dbReference type="PDB" id="6FQ5">
    <property type="method" value="EM"/>
    <property type="resolution" value="3.80 A"/>
    <property type="chains" value="C/G=10-119"/>
</dbReference>
<dbReference type="PDB" id="6FQ6">
    <property type="method" value="EM"/>
    <property type="resolution" value="4.00 A"/>
    <property type="chains" value="C/G=10-119"/>
</dbReference>
<dbReference type="PDB" id="6FQ8">
    <property type="method" value="EM"/>
    <property type="resolution" value="4.80 A"/>
    <property type="chains" value="C/G=10-119"/>
</dbReference>
<dbReference type="PDB" id="6FTX">
    <property type="method" value="EM"/>
    <property type="resolution" value="4.50 A"/>
    <property type="chains" value="C/G=1-130"/>
</dbReference>
<dbReference type="PDB" id="6G0L">
    <property type="method" value="EM"/>
    <property type="resolution" value="4.50 A"/>
    <property type="chains" value="C/G=1-130"/>
</dbReference>
<dbReference type="PDB" id="6I84">
    <property type="method" value="EM"/>
    <property type="resolution" value="4.40 A"/>
    <property type="chains" value="Q/V=1-130"/>
</dbReference>
<dbReference type="PDB" id="6IRO">
    <property type="method" value="EM"/>
    <property type="resolution" value="3.40 A"/>
    <property type="chains" value="C/G=2-130"/>
</dbReference>
<dbReference type="PDB" id="6IY2">
    <property type="method" value="EM"/>
    <property type="resolution" value="3.47 A"/>
    <property type="chains" value="C/G=10-122"/>
</dbReference>
<dbReference type="PDB" id="6IY3">
    <property type="method" value="EM"/>
    <property type="resolution" value="3.67 A"/>
    <property type="chains" value="C/G=10-122"/>
</dbReference>
<dbReference type="PDB" id="6KIU">
    <property type="method" value="EM"/>
    <property type="resolution" value="3.20 A"/>
    <property type="chains" value="C/G=2-130"/>
</dbReference>
<dbReference type="PDB" id="6KIV">
    <property type="method" value="EM"/>
    <property type="resolution" value="4.00 A"/>
    <property type="chains" value="C/G=2-130"/>
</dbReference>
<dbReference type="PDB" id="6KIW">
    <property type="method" value="EM"/>
    <property type="resolution" value="4.00 A"/>
    <property type="chains" value="C/G=2-130"/>
</dbReference>
<dbReference type="PDB" id="6KIX">
    <property type="method" value="EM"/>
    <property type="resolution" value="4.10 A"/>
    <property type="chains" value="C/G=2-130"/>
</dbReference>
<dbReference type="PDB" id="6KIZ">
    <property type="method" value="EM"/>
    <property type="resolution" value="4.50 A"/>
    <property type="chains" value="C/G=2-130"/>
</dbReference>
<dbReference type="PDB" id="6KW3">
    <property type="method" value="EM"/>
    <property type="resolution" value="7.13 A"/>
    <property type="chains" value="O/S=1-130"/>
</dbReference>
<dbReference type="PDB" id="6KW4">
    <property type="method" value="EM"/>
    <property type="resolution" value="7.55 A"/>
    <property type="chains" value="O/S=1-130"/>
</dbReference>
<dbReference type="PDB" id="6KW5">
    <property type="method" value="EM"/>
    <property type="resolution" value="10.13 A"/>
    <property type="chains" value="O/T=1-130"/>
</dbReference>
<dbReference type="PDB" id="6LTJ">
    <property type="method" value="EM"/>
    <property type="resolution" value="3.70 A"/>
    <property type="chains" value="C/G=1-130"/>
</dbReference>
<dbReference type="PDB" id="6N1Z">
    <property type="method" value="X-ray"/>
    <property type="resolution" value="2.70 A"/>
    <property type="chains" value="B/E=1-130"/>
</dbReference>
<dbReference type="PDB" id="6NE3">
    <property type="method" value="EM"/>
    <property type="resolution" value="3.90 A"/>
    <property type="chains" value="C/G=1-130"/>
</dbReference>
<dbReference type="PDB" id="6NJ9">
    <property type="method" value="EM"/>
    <property type="resolution" value="2.96 A"/>
    <property type="chains" value="C/G=2-130"/>
</dbReference>
<dbReference type="PDB" id="6NN6">
    <property type="method" value="EM"/>
    <property type="resolution" value="3.90 A"/>
    <property type="chains" value="C/G=2-130"/>
</dbReference>
<dbReference type="PDB" id="6NOG">
    <property type="method" value="EM"/>
    <property type="resolution" value="3.90 A"/>
    <property type="chains" value="C/G=2-130"/>
</dbReference>
<dbReference type="PDB" id="6NQA">
    <property type="method" value="EM"/>
    <property type="resolution" value="3.54 A"/>
    <property type="chains" value="C/G=2-130"/>
</dbReference>
<dbReference type="PDB" id="6NZO">
    <property type="method" value="EM"/>
    <property type="resolution" value="3.80 A"/>
    <property type="chains" value="C/G=18-130"/>
</dbReference>
<dbReference type="PDB" id="6O96">
    <property type="method" value="EM"/>
    <property type="resolution" value="3.50 A"/>
    <property type="chains" value="C/G=1-130"/>
</dbReference>
<dbReference type="PDB" id="6OM3">
    <property type="method" value="X-ray"/>
    <property type="resolution" value="3.30 A"/>
    <property type="chains" value="C/G/O/S=1-130"/>
</dbReference>
<dbReference type="PDB" id="6PA7">
    <property type="method" value="EM"/>
    <property type="resolution" value="2.94 A"/>
    <property type="chains" value="C/G=2-130"/>
</dbReference>
<dbReference type="PDB" id="6PWV">
    <property type="method" value="EM"/>
    <property type="resolution" value="6.20 A"/>
    <property type="chains" value="I/M=2-130"/>
</dbReference>
<dbReference type="PDB" id="6PWW">
    <property type="method" value="EM"/>
    <property type="resolution" value="4.40 A"/>
    <property type="chains" value="I/M=2-130"/>
</dbReference>
<dbReference type="PDB" id="6PWX">
    <property type="method" value="EM"/>
    <property type="resolution" value="4.20 A"/>
    <property type="chains" value="I/M=2-130"/>
</dbReference>
<dbReference type="PDB" id="6PX1">
    <property type="method" value="EM"/>
    <property type="resolution" value="3.30 A"/>
    <property type="chains" value="C/G=18-130"/>
</dbReference>
<dbReference type="PDB" id="6PX3">
    <property type="method" value="EM"/>
    <property type="resolution" value="4.10 A"/>
    <property type="chains" value="C/G=18-130"/>
</dbReference>
<dbReference type="PDB" id="6R1T">
    <property type="method" value="EM"/>
    <property type="resolution" value="3.70 A"/>
    <property type="chains" value="C/G=11-121"/>
</dbReference>
<dbReference type="PDB" id="6R1U">
    <property type="method" value="EM"/>
    <property type="resolution" value="4.36 A"/>
    <property type="chains" value="C/G=2-130"/>
</dbReference>
<dbReference type="PDB" id="6R25">
    <property type="method" value="EM"/>
    <property type="resolution" value="4.61 A"/>
    <property type="chains" value="C/G=2-130"/>
</dbReference>
<dbReference type="PDB" id="6RYR">
    <property type="method" value="EM"/>
    <property type="resolution" value="3.10 A"/>
    <property type="chains" value="C/G=1-130"/>
</dbReference>
<dbReference type="PDB" id="6RYU">
    <property type="method" value="EM"/>
    <property type="resolution" value="4.00 A"/>
    <property type="chains" value="C/G=1-130"/>
</dbReference>
<dbReference type="PDB" id="6S01">
    <property type="method" value="EM"/>
    <property type="resolution" value="3.20 A"/>
    <property type="chains" value="C/G=2-130"/>
</dbReference>
<dbReference type="PDB" id="6T9L">
    <property type="method" value="EM"/>
    <property type="resolution" value="3.60 A"/>
    <property type="chains" value="C/G=2-130"/>
</dbReference>
<dbReference type="PDB" id="6TDA">
    <property type="method" value="EM"/>
    <property type="resolution" value="15.00 A"/>
    <property type="chains" value="C/G=2-130"/>
</dbReference>
<dbReference type="PDB" id="6TEM">
    <property type="method" value="EM"/>
    <property type="resolution" value="3.90 A"/>
    <property type="chains" value="C/G=2-130"/>
</dbReference>
<dbReference type="PDB" id="6UXW">
    <property type="method" value="EM"/>
    <property type="resolution" value="8.96 A"/>
    <property type="chains" value="T/X=2-130"/>
</dbReference>
<dbReference type="PDB" id="6VEN">
    <property type="method" value="EM"/>
    <property type="resolution" value="3.37 A"/>
    <property type="chains" value="C/G=2-130"/>
</dbReference>
<dbReference type="PDB" id="6VYP">
    <property type="method" value="X-ray"/>
    <property type="resolution" value="4.99 A"/>
    <property type="chains" value="C/G/c/g=2-130"/>
</dbReference>
<dbReference type="PDB" id="6VZ4">
    <property type="method" value="EM"/>
    <property type="resolution" value="3.90 A"/>
    <property type="chains" value="C/G=1-130"/>
</dbReference>
<dbReference type="PDB" id="6W4L">
    <property type="method" value="X-ray"/>
    <property type="resolution" value="1.31 A"/>
    <property type="chains" value="A=14-105"/>
</dbReference>
<dbReference type="PDB" id="6W5I">
    <property type="method" value="EM"/>
    <property type="resolution" value="6.90 A"/>
    <property type="chains" value="I/M=2-130"/>
</dbReference>
<dbReference type="PDB" id="6W5M">
    <property type="method" value="EM"/>
    <property type="resolution" value="4.60 A"/>
    <property type="chains" value="I/M=2-130"/>
</dbReference>
<dbReference type="PDB" id="6W5N">
    <property type="method" value="EM"/>
    <property type="resolution" value="6.00 A"/>
    <property type="chains" value="I/M=2-130"/>
</dbReference>
<dbReference type="PDB" id="6WKR">
    <property type="method" value="EM"/>
    <property type="resolution" value="3.50 A"/>
    <property type="chains" value="K/R=1-130"/>
</dbReference>
<dbReference type="PDB" id="6WZ5">
    <property type="method" value="EM"/>
    <property type="resolution" value="2.20 A"/>
    <property type="chains" value="C/G=2-130"/>
</dbReference>
<dbReference type="PDB" id="6WZ9">
    <property type="method" value="EM"/>
    <property type="resolution" value="2.80 A"/>
    <property type="chains" value="C/G=2-130"/>
</dbReference>
<dbReference type="PDB" id="6X0N">
    <property type="method" value="EM"/>
    <property type="resolution" value="10.00 A"/>
    <property type="chains" value="C/G/c/g=2-130"/>
</dbReference>
<dbReference type="PDB" id="6Z6P">
    <property type="method" value="EM"/>
    <property type="resolution" value="4.43 A"/>
    <property type="chains" value="G=15-119"/>
</dbReference>
<dbReference type="PDB" id="6ZHX">
    <property type="method" value="EM"/>
    <property type="resolution" value="2.50 A"/>
    <property type="chains" value="C/G=1-130"/>
</dbReference>
<dbReference type="PDB" id="6ZHY">
    <property type="method" value="EM"/>
    <property type="resolution" value="3.00 A"/>
    <property type="chains" value="C=1-130"/>
</dbReference>
<dbReference type="PDB" id="7AT8">
    <property type="method" value="EM"/>
    <property type="resolution" value="4.40 A"/>
    <property type="chains" value="F/J=2-130"/>
</dbReference>
<dbReference type="PDB" id="7CRO">
    <property type="method" value="EM"/>
    <property type="resolution" value="3.75 A"/>
    <property type="chains" value="C/G=2-130"/>
</dbReference>
<dbReference type="PDB" id="7CRP">
    <property type="method" value="EM"/>
    <property type="resolution" value="3.20 A"/>
    <property type="chains" value="C/G=2-130"/>
</dbReference>
<dbReference type="PDB" id="7CRQ">
    <property type="method" value="EM"/>
    <property type="resolution" value="3.15 A"/>
    <property type="chains" value="C/G=2-130"/>
</dbReference>
<dbReference type="PDB" id="7CRR">
    <property type="method" value="EM"/>
    <property type="resolution" value="3.48 A"/>
    <property type="chains" value="C/G=2-130"/>
</dbReference>
<dbReference type="PDB" id="7E8I">
    <property type="method" value="EM"/>
    <property type="resolution" value="3.10 A"/>
    <property type="chains" value="C/G=2-130"/>
</dbReference>
<dbReference type="PDB" id="7EG6">
    <property type="method" value="EM"/>
    <property type="resolution" value="3.10 A"/>
    <property type="chains" value="C/G=2-130"/>
</dbReference>
<dbReference type="PDB" id="7ENN">
    <property type="method" value="EM"/>
    <property type="resolution" value="2.80 A"/>
    <property type="chains" value="C/G=2-130"/>
</dbReference>
<dbReference type="PDB" id="7K6P">
    <property type="method" value="EM"/>
    <property type="resolution" value="3.20 A"/>
    <property type="chains" value="C/G=13-119"/>
</dbReference>
<dbReference type="PDB" id="7K6Q">
    <property type="method" value="EM"/>
    <property type="resolution" value="3.10 A"/>
    <property type="chains" value="C/G=13-119"/>
</dbReference>
<dbReference type="PDB" id="7MBM">
    <property type="method" value="EM"/>
    <property type="chains" value="I/M=2-130"/>
</dbReference>
<dbReference type="PDB" id="7MBN">
    <property type="method" value="EM"/>
    <property type="chains" value="I/M=2-130"/>
</dbReference>
<dbReference type="PDB" id="7NKX">
    <property type="method" value="EM"/>
    <property type="resolution" value="2.90 A"/>
    <property type="chains" value="c/g=1-130"/>
</dbReference>
<dbReference type="PDB" id="7NKY">
    <property type="method" value="EM"/>
    <property type="resolution" value="3.20 A"/>
    <property type="chains" value="c/g=1-130"/>
</dbReference>
<dbReference type="PDB" id="7OH9">
    <property type="method" value="EM"/>
    <property type="resolution" value="3.00 A"/>
    <property type="chains" value="C/G=2-130"/>
</dbReference>
<dbReference type="PDB" id="7OHA">
    <property type="method" value="EM"/>
    <property type="resolution" value="2.90 A"/>
    <property type="chains" value="C/G=2-130"/>
</dbReference>
<dbReference type="PDB" id="7OHB">
    <property type="method" value="EM"/>
    <property type="resolution" value="3.40 A"/>
    <property type="chains" value="C/G=2-130"/>
</dbReference>
<dbReference type="PDB" id="7OHC">
    <property type="method" value="EM"/>
    <property type="resolution" value="2.50 A"/>
    <property type="chains" value="C/G=2-130"/>
</dbReference>
<dbReference type="PDB" id="7OTQ">
    <property type="method" value="EM"/>
    <property type="resolution" value="4.80 A"/>
    <property type="chains" value="C/G=1-130"/>
</dbReference>
<dbReference type="PDB" id="7SWY">
    <property type="method" value="EM"/>
    <property type="resolution" value="2.60 A"/>
    <property type="chains" value="C/G=2-130"/>
</dbReference>
<dbReference type="PDB" id="7TN2">
    <property type="method" value="EM"/>
    <property type="resolution" value="2.30 A"/>
    <property type="chains" value="C/G=2-130"/>
</dbReference>
<dbReference type="PDB" id="7UD5">
    <property type="method" value="EM"/>
    <property type="resolution" value="4.25 A"/>
    <property type="chains" value="C/G=1-130"/>
</dbReference>
<dbReference type="PDB" id="7VDT">
    <property type="method" value="EM"/>
    <property type="resolution" value="2.80 A"/>
    <property type="chains" value="C/G=1-130"/>
</dbReference>
<dbReference type="PDB" id="7VDV">
    <property type="method" value="EM"/>
    <property type="resolution" value="3.40 A"/>
    <property type="chains" value="C/G=1-130"/>
</dbReference>
<dbReference type="PDB" id="7VVU">
    <property type="method" value="EM"/>
    <property type="resolution" value="3.40 A"/>
    <property type="chains" value="N/S=1-130"/>
</dbReference>
<dbReference type="PDB" id="7VVZ">
    <property type="method" value="EM"/>
    <property type="resolution" value="8.80 A"/>
    <property type="chains" value="N/S=1-130"/>
</dbReference>
<dbReference type="PDB" id="7X3T">
    <property type="method" value="EM"/>
    <property type="resolution" value="5.40 A"/>
    <property type="chains" value="C/G/M/Q=1-130"/>
</dbReference>
<dbReference type="PDB" id="7X3V">
    <property type="method" value="EM"/>
    <property type="resolution" value="3.09 A"/>
    <property type="chains" value="C/G=1-130"/>
</dbReference>
<dbReference type="PDB" id="7X3W">
    <property type="method" value="EM"/>
    <property type="resolution" value="3.10 A"/>
    <property type="chains" value="C/G=1-130"/>
</dbReference>
<dbReference type="PDB" id="7X3X">
    <property type="method" value="EM"/>
    <property type="resolution" value="3.20 A"/>
    <property type="chains" value="C/G=1-130"/>
</dbReference>
<dbReference type="PDB" id="7XFC">
    <property type="method" value="EM"/>
    <property type="resolution" value="2.90 A"/>
    <property type="chains" value="C/G=1-130"/>
</dbReference>
<dbReference type="PDB" id="7XFH">
    <property type="method" value="EM"/>
    <property type="resolution" value="2.90 A"/>
    <property type="chains" value="C/G=1-130"/>
</dbReference>
<dbReference type="PDB" id="7XFI">
    <property type="method" value="EM"/>
    <property type="resolution" value="2.90 A"/>
    <property type="chains" value="C/G=1-130"/>
</dbReference>
<dbReference type="PDB" id="7XFJ">
    <property type="method" value="EM"/>
    <property type="resolution" value="3.00 A"/>
    <property type="chains" value="C/G=1-130"/>
</dbReference>
<dbReference type="PDB" id="7XFL">
    <property type="method" value="EM"/>
    <property type="resolution" value="2.80 A"/>
    <property type="chains" value="C/G=1-130"/>
</dbReference>
<dbReference type="PDB" id="7XFM">
    <property type="method" value="EM"/>
    <property type="resolution" value="3.10 A"/>
    <property type="chains" value="C/G=1-130"/>
</dbReference>
<dbReference type="PDB" id="7XFN">
    <property type="method" value="EM"/>
    <property type="resolution" value="2.80 A"/>
    <property type="chains" value="C/G=1-130"/>
</dbReference>
<dbReference type="PDB" id="7XNP">
    <property type="method" value="EM"/>
    <property type="resolution" value="2.90 A"/>
    <property type="chains" value="C/G=1-130"/>
</dbReference>
<dbReference type="PDB" id="7XPX">
    <property type="method" value="EM"/>
    <property type="resolution" value="3.20 A"/>
    <property type="chains" value="C/G=2-130"/>
</dbReference>
<dbReference type="PDB" id="7YI1">
    <property type="method" value="EM"/>
    <property type="resolution" value="2.80 A"/>
    <property type="chains" value="C/G=2-130"/>
</dbReference>
<dbReference type="PDB" id="7YI4">
    <property type="method" value="EM"/>
    <property type="resolution" value="3.96 A"/>
    <property type="chains" value="I/M=2-130"/>
</dbReference>
<dbReference type="PDB" id="7YI5">
    <property type="method" value="EM"/>
    <property type="resolution" value="3.96 A"/>
    <property type="chains" value="I/M=2-130"/>
</dbReference>
<dbReference type="PDB" id="7ZS9">
    <property type="method" value="EM"/>
    <property type="resolution" value="3.10 A"/>
    <property type="chains" value="c/g=2-130"/>
</dbReference>
<dbReference type="PDB" id="7ZSA">
    <property type="method" value="EM"/>
    <property type="resolution" value="4.00 A"/>
    <property type="chains" value="c/g=2-130"/>
</dbReference>
<dbReference type="PDB" id="7ZSB">
    <property type="method" value="EM"/>
    <property type="resolution" value="6.60 A"/>
    <property type="chains" value="c/g=2-130"/>
</dbReference>
<dbReference type="PDB" id="8AAG">
    <property type="method" value="EM"/>
    <property type="resolution" value="10.00 A"/>
    <property type="chains" value="C/G=2-130"/>
</dbReference>
<dbReference type="PDB" id="8B0A">
    <property type="method" value="EM"/>
    <property type="resolution" value="3.00 A"/>
    <property type="chains" value="C/G=1-130"/>
</dbReference>
<dbReference type="PDB" id="8BVW">
    <property type="method" value="EM"/>
    <property type="resolution" value="4.00 A"/>
    <property type="chains" value="c/g=1-130"/>
</dbReference>
<dbReference type="PDB" id="8BYQ">
    <property type="method" value="EM"/>
    <property type="resolution" value="4.10 A"/>
    <property type="chains" value="c/g=1-130"/>
</dbReference>
<dbReference type="PDB" id="8BZ1">
    <property type="method" value="EM"/>
    <property type="resolution" value="3.80 A"/>
    <property type="chains" value="c/g=1-130"/>
</dbReference>
<dbReference type="PDB" id="8CBN">
    <property type="method" value="EM"/>
    <property type="resolution" value="3.34 A"/>
    <property type="chains" value="C/G=2-130"/>
</dbReference>
<dbReference type="PDB" id="8CBQ">
    <property type="method" value="EM"/>
    <property type="resolution" value="4.00 A"/>
    <property type="chains" value="C/G=2-130"/>
</dbReference>
<dbReference type="PDB" id="8CEO">
    <property type="method" value="EM"/>
    <property type="resolution" value="3.60 A"/>
    <property type="chains" value="t/x=2-130"/>
</dbReference>
<dbReference type="PDB" id="8CWW">
    <property type="method" value="EM"/>
    <property type="resolution" value="2.74 A"/>
    <property type="chains" value="C/G=2-130"/>
</dbReference>
<dbReference type="PDB" id="8CZE">
    <property type="method" value="EM"/>
    <property type="resolution" value="2.58 A"/>
    <property type="chains" value="C/G=2-130"/>
</dbReference>
<dbReference type="PDB" id="8DU4">
    <property type="method" value="EM"/>
    <property type="resolution" value="3.55 A"/>
    <property type="chains" value="C/G=1-130"/>
</dbReference>
<dbReference type="PDB" id="8ETT">
    <property type="method" value="EM"/>
    <property type="resolution" value="6.68 A"/>
    <property type="chains" value="C=1-130"/>
</dbReference>
<dbReference type="PDB" id="8EUE">
    <property type="method" value="EM"/>
    <property type="resolution" value="3.48 A"/>
    <property type="chains" value="C/K=16-121"/>
</dbReference>
<dbReference type="PDB" id="8EUJ">
    <property type="method" value="EM"/>
    <property type="resolution" value="3.36 A"/>
    <property type="chains" value="a/k=16-121"/>
</dbReference>
<dbReference type="PDB" id="8F86">
    <property type="method" value="EM"/>
    <property type="resolution" value="3.10 A"/>
    <property type="chains" value="C/G=2-130"/>
</dbReference>
<dbReference type="PDB" id="8G6G">
    <property type="method" value="EM"/>
    <property type="resolution" value="2.93 A"/>
    <property type="chains" value="C/G=1-130"/>
</dbReference>
<dbReference type="PDB" id="8G6H">
    <property type="method" value="EM"/>
    <property type="resolution" value="3.06 A"/>
    <property type="chains" value="C/G=1-130"/>
</dbReference>
<dbReference type="PDB" id="8G6Q">
    <property type="method" value="EM"/>
    <property type="resolution" value="3.41 A"/>
    <property type="chains" value="C/G=1-130"/>
</dbReference>
<dbReference type="PDB" id="8G6S">
    <property type="method" value="EM"/>
    <property type="resolution" value="3.47 A"/>
    <property type="chains" value="C/G=1-130"/>
</dbReference>
<dbReference type="PDB" id="8GPN">
    <property type="method" value="EM"/>
    <property type="resolution" value="3.20 A"/>
    <property type="chains" value="C/G=1-130"/>
</dbReference>
<dbReference type="PDB" id="8HXY">
    <property type="method" value="EM"/>
    <property type="resolution" value="3.10 A"/>
    <property type="chains" value="C/G=2-130"/>
</dbReference>
<dbReference type="PDB" id="8HXZ">
    <property type="method" value="EM"/>
    <property type="resolution" value="3.40 A"/>
    <property type="chains" value="C/G=2-130"/>
</dbReference>
<dbReference type="PDB" id="8HY0">
    <property type="method" value="EM"/>
    <property type="resolution" value="3.10 A"/>
    <property type="chains" value="C/G=2-130"/>
</dbReference>
<dbReference type="PDB" id="8IHM">
    <property type="method" value="EM"/>
    <property type="resolution" value="3.58 A"/>
    <property type="chains" value="C/G=2-130"/>
</dbReference>
<dbReference type="PDB" id="8IHT">
    <property type="method" value="EM"/>
    <property type="resolution" value="3.72 A"/>
    <property type="chains" value="C/G=2-130"/>
</dbReference>
<dbReference type="PDB" id="8JHO">
    <property type="method" value="EM"/>
    <property type="resolution" value="7.60 A"/>
    <property type="chains" value="C/G/c/g=2-130"/>
</dbReference>
<dbReference type="PDB" id="8KD2">
    <property type="method" value="EM"/>
    <property type="resolution" value="3.02 A"/>
    <property type="chains" value="Q/U=2-130"/>
</dbReference>
<dbReference type="PDB" id="8KD4">
    <property type="method" value="EM"/>
    <property type="resolution" value="2.93 A"/>
    <property type="chains" value="Q/U=2-130"/>
</dbReference>
<dbReference type="PDB" id="8KD5">
    <property type="method" value="EM"/>
    <property type="resolution" value="2.90 A"/>
    <property type="chains" value="Q/U=2-130"/>
</dbReference>
<dbReference type="PDB" id="8KD6">
    <property type="method" value="EM"/>
    <property type="resolution" value="3.07 A"/>
    <property type="chains" value="Q/U=2-130"/>
</dbReference>
<dbReference type="PDB" id="8KD7">
    <property type="method" value="EM"/>
    <property type="resolution" value="3.09 A"/>
    <property type="chains" value="Q/U=2-130"/>
</dbReference>
<dbReference type="PDB" id="8OF4">
    <property type="method" value="EM"/>
    <property type="resolution" value="2.94 A"/>
    <property type="chains" value="C/G=1-130"/>
</dbReference>
<dbReference type="PDB" id="8PC5">
    <property type="method" value="EM"/>
    <property type="resolution" value="3.02 A"/>
    <property type="chains" value="C/G=2-130"/>
</dbReference>
<dbReference type="PDB" id="8PC6">
    <property type="method" value="EM"/>
    <property type="resolution" value="3.04 A"/>
    <property type="chains" value="C/G=2-130"/>
</dbReference>
<dbReference type="PDB" id="8PEO">
    <property type="method" value="EM"/>
    <property type="resolution" value="2.69 A"/>
    <property type="chains" value="C/G=2-130"/>
</dbReference>
<dbReference type="PDB" id="8PEP">
    <property type="method" value="EM"/>
    <property type="resolution" value="3.33 A"/>
    <property type="chains" value="C/G=2-130"/>
</dbReference>
<dbReference type="PDB" id="8RUP">
    <property type="method" value="EM"/>
    <property type="resolution" value="2.42 A"/>
    <property type="chains" value="C/G=1-130"/>
</dbReference>
<dbReference type="PDB" id="8SIY">
    <property type="method" value="EM"/>
    <property type="resolution" value="2.90 A"/>
    <property type="chains" value="E/I=2-130"/>
</dbReference>
<dbReference type="PDB" id="8SKZ">
    <property type="method" value="EM"/>
    <property type="resolution" value="3.50 A"/>
    <property type="chains" value="C/G=1-130"/>
</dbReference>
<dbReference type="PDB" id="8SVF">
    <property type="method" value="EM"/>
    <property type="resolution" value="3.20 A"/>
    <property type="chains" value="C/G=1-130"/>
</dbReference>
<dbReference type="PDB" id="8T3T">
    <property type="method" value="EM"/>
    <property type="resolution" value="3.21 A"/>
    <property type="chains" value="C/G=2-130"/>
</dbReference>
<dbReference type="PDB" id="8T3W">
    <property type="method" value="EM"/>
    <property type="resolution" value="3.25 A"/>
    <property type="chains" value="C/G=2-130"/>
</dbReference>
<dbReference type="PDB" id="8T3Y">
    <property type="method" value="EM"/>
    <property type="resolution" value="3.47 A"/>
    <property type="chains" value="C/G=2-130"/>
</dbReference>
<dbReference type="PDB" id="8T9G">
    <property type="method" value="EM"/>
    <property type="resolution" value="6.20 A"/>
    <property type="chains" value="R/U=1-130"/>
</dbReference>
<dbReference type="PDB" id="8T9H">
    <property type="method" value="EM"/>
    <property type="resolution" value="3.37 A"/>
    <property type="chains" value="C/G=1-130"/>
</dbReference>
<dbReference type="PDB" id="8TAS">
    <property type="method" value="EM"/>
    <property type="resolution" value="4.10 A"/>
    <property type="chains" value="R/U=1-130"/>
</dbReference>
<dbReference type="PDB" id="8TB9">
    <property type="method" value="EM"/>
    <property type="resolution" value="4.00 A"/>
    <property type="chains" value="R/U=1-130"/>
</dbReference>
<dbReference type="PDB" id="8TOF">
    <property type="method" value="EM"/>
    <property type="resolution" value="2.80 A"/>
    <property type="chains" value="c/g=1-130"/>
</dbReference>
<dbReference type="PDB" id="8U5H">
    <property type="method" value="EM"/>
    <property type="resolution" value="3.23 A"/>
    <property type="chains" value="K/R=1-130"/>
</dbReference>
<dbReference type="PDB" id="8UW1">
    <property type="method" value="EM"/>
    <property type="resolution" value="2.88 A"/>
    <property type="chains" value="C/G=1-130"/>
</dbReference>
<dbReference type="PDB" id="8V25">
    <property type="method" value="EM"/>
    <property type="resolution" value="3.32 A"/>
    <property type="chains" value="C/G=1-130"/>
</dbReference>
<dbReference type="PDB" id="8V26">
    <property type="method" value="EM"/>
    <property type="resolution" value="3.33 A"/>
    <property type="chains" value="C/G=1-130"/>
</dbReference>
<dbReference type="PDB" id="8V27">
    <property type="method" value="EM"/>
    <property type="resolution" value="3.34 A"/>
    <property type="chains" value="C/G=1-130"/>
</dbReference>
<dbReference type="PDB" id="8V28">
    <property type="method" value="EM"/>
    <property type="resolution" value="3.36 A"/>
    <property type="chains" value="C/G=1-130"/>
</dbReference>
<dbReference type="PDB" id="8V4Y">
    <property type="method" value="EM"/>
    <property type="resolution" value="2.80 A"/>
    <property type="chains" value="C/G=2-130"/>
</dbReference>
<dbReference type="PDB" id="8V6V">
    <property type="method" value="EM"/>
    <property type="resolution" value="2.80 A"/>
    <property type="chains" value="C/G=2-130"/>
</dbReference>
<dbReference type="PDB" id="8V7L">
    <property type="method" value="EM"/>
    <property type="resolution" value="2.90 A"/>
    <property type="chains" value="C/G=2-130"/>
</dbReference>
<dbReference type="PDB" id="8VX5">
    <property type="method" value="EM"/>
    <property type="resolution" value="3.30 A"/>
    <property type="chains" value="C/G=1-130"/>
</dbReference>
<dbReference type="PDB" id="8VX6">
    <property type="method" value="EM"/>
    <property type="resolution" value="3.20 A"/>
    <property type="chains" value="C/G=1-130"/>
</dbReference>
<dbReference type="PDB" id="9B2T">
    <property type="method" value="EM"/>
    <property type="resolution" value="2.99 A"/>
    <property type="chains" value="C/G=1-130"/>
</dbReference>
<dbReference type="PDB" id="9DBY">
    <property type="method" value="EM"/>
    <property type="resolution" value="2.80 A"/>
    <property type="chains" value="C/G=1-130"/>
</dbReference>
<dbReference type="PDB" id="9DDE">
    <property type="method" value="EM"/>
    <property type="resolution" value="3.20 A"/>
    <property type="chains" value="C/G=1-130"/>
</dbReference>
<dbReference type="PDB" id="9DG3">
    <property type="method" value="EM"/>
    <property type="resolution" value="3.46 A"/>
    <property type="chains" value="C/G=1-130"/>
</dbReference>
<dbReference type="PDB" id="9DGG">
    <property type="method" value="EM"/>
    <property type="resolution" value="2.98 A"/>
    <property type="chains" value="C/G=1-130"/>
</dbReference>
<dbReference type="PDB" id="9E1L">
    <property type="method" value="EM"/>
    <property type="resolution" value="3.15 A"/>
    <property type="chains" value="C/G=1-130"/>
</dbReference>
<dbReference type="PDB" id="9E1M">
    <property type="method" value="EM"/>
    <property type="resolution" value="3.25 A"/>
    <property type="chains" value="C/G=1-130"/>
</dbReference>
<dbReference type="PDB" id="9E1N">
    <property type="method" value="EM"/>
    <property type="resolution" value="3.40 A"/>
    <property type="chains" value="C/G=1-130"/>
</dbReference>
<dbReference type="PDB" id="9E1O">
    <property type="method" value="EM"/>
    <property type="resolution" value="3.30 A"/>
    <property type="chains" value="C/G=1-130"/>
</dbReference>
<dbReference type="PDB" id="9E1P">
    <property type="method" value="EM"/>
    <property type="resolution" value="3.25 A"/>
    <property type="chains" value="C/G=1-130"/>
</dbReference>
<dbReference type="PDB" id="9E1Q">
    <property type="method" value="EM"/>
    <property type="resolution" value="3.10 A"/>
    <property type="chains" value="C/G=1-130"/>
</dbReference>
<dbReference type="PDB" id="9E1R">
    <property type="method" value="EM"/>
    <property type="resolution" value="3.10 A"/>
    <property type="chains" value="C/G=1-130"/>
</dbReference>
<dbReference type="PDB" id="9E1U">
    <property type="method" value="EM"/>
    <property type="resolution" value="3.10 A"/>
    <property type="chains" value="C/G=1-130"/>
</dbReference>
<dbReference type="PDB" id="9E1V">
    <property type="method" value="EM"/>
    <property type="resolution" value="3.10 A"/>
    <property type="chains" value="C/G=1-130"/>
</dbReference>
<dbReference type="PDB" id="9E1W">
    <property type="method" value="EM"/>
    <property type="resolution" value="3.20 A"/>
    <property type="chains" value="C/G=1-130"/>
</dbReference>
<dbReference type="PDB" id="9E1Y">
    <property type="method" value="EM"/>
    <property type="resolution" value="2.60 A"/>
    <property type="chains" value="C/G=1-130"/>
</dbReference>
<dbReference type="PDB" id="9EGX">
    <property type="method" value="EM"/>
    <property type="resolution" value="2.90 A"/>
    <property type="chains" value="c=1-130"/>
</dbReference>
<dbReference type="PDB" id="9EGY">
    <property type="method" value="EM"/>
    <property type="resolution" value="2.90 A"/>
    <property type="chains" value="c/g=1-130"/>
</dbReference>
<dbReference type="PDB" id="9EGZ">
    <property type="method" value="EM"/>
    <property type="resolution" value="2.90 A"/>
    <property type="chains" value="c/g=1-130"/>
</dbReference>
<dbReference type="PDB" id="9EH0">
    <property type="method" value="EM"/>
    <property type="resolution" value="3.60 A"/>
    <property type="chains" value="c/g=1-130"/>
</dbReference>
<dbReference type="PDB" id="9EH1">
    <property type="method" value="EM"/>
    <property type="resolution" value="3.10 A"/>
    <property type="chains" value="c/g=1-130"/>
</dbReference>
<dbReference type="PDB" id="9EH2">
    <property type="method" value="EM"/>
    <property type="resolution" value="3.10 A"/>
    <property type="chains" value="g=1-130"/>
</dbReference>
<dbReference type="PDB" id="9GD0">
    <property type="method" value="EM"/>
    <property type="resolution" value="2.80 A"/>
    <property type="chains" value="C/G/M=1-130"/>
</dbReference>
<dbReference type="PDB" id="9GD1">
    <property type="method" value="EM"/>
    <property type="resolution" value="4.00 A"/>
    <property type="chains" value="C/G/M=1-130"/>
</dbReference>
<dbReference type="PDB" id="9GD2">
    <property type="method" value="EM"/>
    <property type="resolution" value="4.20 A"/>
    <property type="chains" value="C/G/M/R=1-130"/>
</dbReference>
<dbReference type="PDB" id="9GD3">
    <property type="method" value="EM"/>
    <property type="resolution" value="3.00 A"/>
    <property type="chains" value="C/G=1-130"/>
</dbReference>
<dbReference type="PDBsum" id="1AOI"/>
<dbReference type="PDBsum" id="1KX3"/>
<dbReference type="PDBsum" id="1KX4"/>
<dbReference type="PDBsum" id="1KX5"/>
<dbReference type="PDBsum" id="1M18"/>
<dbReference type="PDBsum" id="1M19"/>
<dbReference type="PDBsum" id="1M1A"/>
<dbReference type="PDBsum" id="1P34"/>
<dbReference type="PDBsum" id="1P3A"/>
<dbReference type="PDBsum" id="1P3B"/>
<dbReference type="PDBsum" id="1P3F"/>
<dbReference type="PDBsum" id="1P3G"/>
<dbReference type="PDBsum" id="1P3I"/>
<dbReference type="PDBsum" id="1P3K"/>
<dbReference type="PDBsum" id="1P3L"/>
<dbReference type="PDBsum" id="1P3M"/>
<dbReference type="PDBsum" id="1P3O"/>
<dbReference type="PDBsum" id="1P3P"/>
<dbReference type="PDBsum" id="1S32"/>
<dbReference type="PDBsum" id="1ZBB"/>
<dbReference type="PDBsum" id="1ZLA"/>
<dbReference type="PDBsum" id="2FJ7"/>
<dbReference type="PDBsum" id="2NZD"/>
<dbReference type="PDBsum" id="3B6F"/>
<dbReference type="PDBsum" id="3B6G"/>
<dbReference type="PDBsum" id="3C1B"/>
<dbReference type="PDBsum" id="3C1C"/>
<dbReference type="PDBsum" id="3KUY"/>
<dbReference type="PDBsum" id="3KWQ"/>
<dbReference type="PDBsum" id="3LJA"/>
<dbReference type="PDBsum" id="3MNN"/>
<dbReference type="PDBsum" id="3O62"/>
<dbReference type="PDBsum" id="3REH"/>
<dbReference type="PDBsum" id="3REI"/>
<dbReference type="PDBsum" id="3REJ"/>
<dbReference type="PDBsum" id="3REK"/>
<dbReference type="PDBsum" id="3REL"/>
<dbReference type="PDBsum" id="3TU4"/>
<dbReference type="PDBsum" id="3UT9"/>
<dbReference type="PDBsum" id="3UTA"/>
<dbReference type="PDBsum" id="3UTB"/>
<dbReference type="PDBsum" id="4J8U"/>
<dbReference type="PDBsum" id="4J8V"/>
<dbReference type="PDBsum" id="4J8W"/>
<dbReference type="PDBsum" id="4J8X"/>
<dbReference type="PDBsum" id="4LD9"/>
<dbReference type="PDBsum" id="4R8P"/>
<dbReference type="PDBsum" id="4WU8"/>
<dbReference type="PDBsum" id="4WU9"/>
<dbReference type="PDBsum" id="4XUJ"/>
<dbReference type="PDBsum" id="4XZQ"/>
<dbReference type="PDBsum" id="4YS3"/>
<dbReference type="PDBsum" id="4Z66"/>
<dbReference type="PDBsum" id="4ZUX"/>
<dbReference type="PDBsum" id="5CP6"/>
<dbReference type="PDBsum" id="5DNM"/>
<dbReference type="PDBsum" id="5DNN"/>
<dbReference type="PDBsum" id="5E5A"/>
<dbReference type="PDBsum" id="5F99"/>
<dbReference type="PDBsum" id="5G2E"/>
<dbReference type="PDBsum" id="5HQ2"/>
<dbReference type="PDBsum" id="5MLU"/>
<dbReference type="PDBsum" id="5NL0"/>
<dbReference type="PDBsum" id="5O9G"/>
<dbReference type="PDBsum" id="5OMX"/>
<dbReference type="PDBsum" id="5ONG"/>
<dbReference type="PDBsum" id="5ONW"/>
<dbReference type="PDBsum" id="5OXV"/>
<dbReference type="PDBsum" id="5OY7"/>
<dbReference type="PDBsum" id="5X0X"/>
<dbReference type="PDBsum" id="5X0Y"/>
<dbReference type="PDBsum" id="5XF6"/>
<dbReference type="PDBsum" id="5Z3L"/>
<dbReference type="PDBsum" id="5Z3O"/>
<dbReference type="PDBsum" id="6FQ5"/>
<dbReference type="PDBsum" id="6FQ6"/>
<dbReference type="PDBsum" id="6FQ8"/>
<dbReference type="PDBsum" id="6FTX"/>
<dbReference type="PDBsum" id="6G0L"/>
<dbReference type="PDBsum" id="6I84"/>
<dbReference type="PDBsum" id="6IRO"/>
<dbReference type="PDBsum" id="6IY2"/>
<dbReference type="PDBsum" id="6IY3"/>
<dbReference type="PDBsum" id="6KIU"/>
<dbReference type="PDBsum" id="6KIV"/>
<dbReference type="PDBsum" id="6KIW"/>
<dbReference type="PDBsum" id="6KIX"/>
<dbReference type="PDBsum" id="6KIZ"/>
<dbReference type="PDBsum" id="6KW3"/>
<dbReference type="PDBsum" id="6KW4"/>
<dbReference type="PDBsum" id="6KW5"/>
<dbReference type="PDBsum" id="6LTJ"/>
<dbReference type="PDBsum" id="6N1Z"/>
<dbReference type="PDBsum" id="6NE3"/>
<dbReference type="PDBsum" id="6NJ9"/>
<dbReference type="PDBsum" id="6NN6"/>
<dbReference type="PDBsum" id="6NOG"/>
<dbReference type="PDBsum" id="6NQA"/>
<dbReference type="PDBsum" id="6NZO"/>
<dbReference type="PDBsum" id="6O96"/>
<dbReference type="PDBsum" id="6OM3"/>
<dbReference type="PDBsum" id="6PA7"/>
<dbReference type="PDBsum" id="6PWV"/>
<dbReference type="PDBsum" id="6PWW"/>
<dbReference type="PDBsum" id="6PWX"/>
<dbReference type="PDBsum" id="6PX1"/>
<dbReference type="PDBsum" id="6PX3"/>
<dbReference type="PDBsum" id="6R1T"/>
<dbReference type="PDBsum" id="6R1U"/>
<dbReference type="PDBsum" id="6R25"/>
<dbReference type="PDBsum" id="6RYR"/>
<dbReference type="PDBsum" id="6RYU"/>
<dbReference type="PDBsum" id="6S01"/>
<dbReference type="PDBsum" id="6T9L"/>
<dbReference type="PDBsum" id="6TDA"/>
<dbReference type="PDBsum" id="6TEM"/>
<dbReference type="PDBsum" id="6UXW"/>
<dbReference type="PDBsum" id="6VEN"/>
<dbReference type="PDBsum" id="6VYP"/>
<dbReference type="PDBsum" id="6VZ4"/>
<dbReference type="PDBsum" id="6W4L"/>
<dbReference type="PDBsum" id="6W5I"/>
<dbReference type="PDBsum" id="6W5M"/>
<dbReference type="PDBsum" id="6W5N"/>
<dbReference type="PDBsum" id="6WKR"/>
<dbReference type="PDBsum" id="6WZ5"/>
<dbReference type="PDBsum" id="6WZ9"/>
<dbReference type="PDBsum" id="6X0N"/>
<dbReference type="PDBsum" id="6Z6P"/>
<dbReference type="PDBsum" id="6ZHX"/>
<dbReference type="PDBsum" id="6ZHY"/>
<dbReference type="PDBsum" id="7AT8"/>
<dbReference type="PDBsum" id="7CRO"/>
<dbReference type="PDBsum" id="7CRP"/>
<dbReference type="PDBsum" id="7CRQ"/>
<dbReference type="PDBsum" id="7CRR"/>
<dbReference type="PDBsum" id="7E8I"/>
<dbReference type="PDBsum" id="7EG6"/>
<dbReference type="PDBsum" id="7ENN"/>
<dbReference type="PDBsum" id="7K6P"/>
<dbReference type="PDBsum" id="7K6Q"/>
<dbReference type="PDBsum" id="7MBM"/>
<dbReference type="PDBsum" id="7MBN"/>
<dbReference type="PDBsum" id="7NKX"/>
<dbReference type="PDBsum" id="7NKY"/>
<dbReference type="PDBsum" id="7OH9"/>
<dbReference type="PDBsum" id="7OHA"/>
<dbReference type="PDBsum" id="7OHB"/>
<dbReference type="PDBsum" id="7OHC"/>
<dbReference type="PDBsum" id="7OTQ"/>
<dbReference type="PDBsum" id="7SWY"/>
<dbReference type="PDBsum" id="7TN2"/>
<dbReference type="PDBsum" id="7UD5"/>
<dbReference type="PDBsum" id="7VDT"/>
<dbReference type="PDBsum" id="7VDV"/>
<dbReference type="PDBsum" id="7VVU"/>
<dbReference type="PDBsum" id="7VVZ"/>
<dbReference type="PDBsum" id="7X3T"/>
<dbReference type="PDBsum" id="7X3V"/>
<dbReference type="PDBsum" id="7X3W"/>
<dbReference type="PDBsum" id="7X3X"/>
<dbReference type="PDBsum" id="7XFC"/>
<dbReference type="PDBsum" id="7XFH"/>
<dbReference type="PDBsum" id="7XFI"/>
<dbReference type="PDBsum" id="7XFJ"/>
<dbReference type="PDBsum" id="7XFL"/>
<dbReference type="PDBsum" id="7XFM"/>
<dbReference type="PDBsum" id="7XFN"/>
<dbReference type="PDBsum" id="7XNP"/>
<dbReference type="PDBsum" id="7XPX"/>
<dbReference type="PDBsum" id="7YI1"/>
<dbReference type="PDBsum" id="7YI4"/>
<dbReference type="PDBsum" id="7YI5"/>
<dbReference type="PDBsum" id="7ZS9"/>
<dbReference type="PDBsum" id="7ZSA"/>
<dbReference type="PDBsum" id="7ZSB"/>
<dbReference type="PDBsum" id="8AAG"/>
<dbReference type="PDBsum" id="8B0A"/>
<dbReference type="PDBsum" id="8BVW"/>
<dbReference type="PDBsum" id="8BYQ"/>
<dbReference type="PDBsum" id="8BZ1"/>
<dbReference type="PDBsum" id="8CBN"/>
<dbReference type="PDBsum" id="8CBQ"/>
<dbReference type="PDBsum" id="8CEO"/>
<dbReference type="PDBsum" id="8CWW"/>
<dbReference type="PDBsum" id="8CZE"/>
<dbReference type="PDBsum" id="8DU4"/>
<dbReference type="PDBsum" id="8ETT"/>
<dbReference type="PDBsum" id="8EUE"/>
<dbReference type="PDBsum" id="8EUJ"/>
<dbReference type="PDBsum" id="8F86"/>
<dbReference type="PDBsum" id="8G6G"/>
<dbReference type="PDBsum" id="8G6H"/>
<dbReference type="PDBsum" id="8G6Q"/>
<dbReference type="PDBsum" id="8G6S"/>
<dbReference type="PDBsum" id="8GPN"/>
<dbReference type="PDBsum" id="8HXY"/>
<dbReference type="PDBsum" id="8HXZ"/>
<dbReference type="PDBsum" id="8HY0"/>
<dbReference type="PDBsum" id="8IHM"/>
<dbReference type="PDBsum" id="8IHT"/>
<dbReference type="PDBsum" id="8JHO"/>
<dbReference type="PDBsum" id="8KD2"/>
<dbReference type="PDBsum" id="8KD4"/>
<dbReference type="PDBsum" id="8KD5"/>
<dbReference type="PDBsum" id="8KD6"/>
<dbReference type="PDBsum" id="8KD7"/>
<dbReference type="PDBsum" id="8OF4"/>
<dbReference type="PDBsum" id="8PC5"/>
<dbReference type="PDBsum" id="8PC6"/>
<dbReference type="PDBsum" id="8PEO"/>
<dbReference type="PDBsum" id="8PEP"/>
<dbReference type="PDBsum" id="8RUP"/>
<dbReference type="PDBsum" id="8SIY"/>
<dbReference type="PDBsum" id="8SKZ"/>
<dbReference type="PDBsum" id="8SVF"/>
<dbReference type="PDBsum" id="8T3T"/>
<dbReference type="PDBsum" id="8T3W"/>
<dbReference type="PDBsum" id="8T3Y"/>
<dbReference type="PDBsum" id="8T9G"/>
<dbReference type="PDBsum" id="8T9H"/>
<dbReference type="PDBsum" id="8TAS"/>
<dbReference type="PDBsum" id="8TB9"/>
<dbReference type="PDBsum" id="8TOF"/>
<dbReference type="PDBsum" id="8U5H"/>
<dbReference type="PDBsum" id="8UW1"/>
<dbReference type="PDBsum" id="8V25"/>
<dbReference type="PDBsum" id="8V26"/>
<dbReference type="PDBsum" id="8V27"/>
<dbReference type="PDBsum" id="8V28"/>
<dbReference type="PDBsum" id="8V4Y"/>
<dbReference type="PDBsum" id="8V6V"/>
<dbReference type="PDBsum" id="8V7L"/>
<dbReference type="PDBsum" id="8VX5"/>
<dbReference type="PDBsum" id="8VX6"/>
<dbReference type="PDBsum" id="9B2T"/>
<dbReference type="PDBsum" id="9DBY"/>
<dbReference type="PDBsum" id="9DDE"/>
<dbReference type="PDBsum" id="9DG3"/>
<dbReference type="PDBsum" id="9DGG"/>
<dbReference type="PDBsum" id="9E1L"/>
<dbReference type="PDBsum" id="9E1M"/>
<dbReference type="PDBsum" id="9E1N"/>
<dbReference type="PDBsum" id="9E1O"/>
<dbReference type="PDBsum" id="9E1P"/>
<dbReference type="PDBsum" id="9E1Q"/>
<dbReference type="PDBsum" id="9E1R"/>
<dbReference type="PDBsum" id="9E1U"/>
<dbReference type="PDBsum" id="9E1V"/>
<dbReference type="PDBsum" id="9E1W"/>
<dbReference type="PDBsum" id="9E1Y"/>
<dbReference type="PDBsum" id="9EGX"/>
<dbReference type="PDBsum" id="9EGY"/>
<dbReference type="PDBsum" id="9EGZ"/>
<dbReference type="PDBsum" id="9EH0"/>
<dbReference type="PDBsum" id="9EH1"/>
<dbReference type="PDBsum" id="9EH2"/>
<dbReference type="PDBsum" id="9GD0"/>
<dbReference type="PDBsum" id="9GD1"/>
<dbReference type="PDBsum" id="9GD2"/>
<dbReference type="PDBsum" id="9GD3"/>
<dbReference type="EMDB" id="EMD-0458"/>
<dbReference type="EMDB" id="EMD-0468"/>
<dbReference type="EMDB" id="EMD-0480"/>
<dbReference type="EMDB" id="EMD-0974"/>
<dbReference type="EMDB" id="EMD-10058"/>
<dbReference type="EMDB" id="EMD-10059"/>
<dbReference type="EMDB" id="EMD-11102"/>
<dbReference type="EMDB" id="EMD-11220"/>
<dbReference type="EMDB" id="EMD-11221"/>
<dbReference type="EMDB" id="EMD-12449"/>
<dbReference type="EMDB" id="EMD-12450"/>
<dbReference type="EMDB" id="EMD-13065"/>
<dbReference type="EMDB" id="EMD-15777"/>
<dbReference type="EMDB" id="EMD-16274"/>
<dbReference type="EMDB" id="EMD-16331"/>
<dbReference type="EMDB" id="EMD-16335"/>
<dbReference type="EMDB" id="EMD-16842"/>
<dbReference type="EMDB" id="EMD-16845"/>
<dbReference type="EMDB" id="EMD-17944"/>
<dbReference type="EMDB" id="EMD-19513"/>
<dbReference type="EMDB" id="EMD-20281"/>
<dbReference type="EMDB" id="EMD-20512"/>
<dbReference type="EMDB" id="EMD-20513"/>
<dbReference type="EMDB" id="EMD-20514"/>
<dbReference type="EMDB" id="EMD-20934"/>
<dbReference type="EMDB" id="EMD-21157"/>
<dbReference type="EMDB" id="EMD-21543"/>
<dbReference type="EMDB" id="EMD-21544"/>
<dbReference type="EMDB" id="EMD-21707"/>
<dbReference type="EMDB" id="EMD-22691"/>
<dbReference type="EMDB" id="EMD-22692"/>
<dbReference type="EMDB" id="EMD-27030"/>
<dbReference type="EMDB" id="EMD-27096"/>
<dbReference type="EMDB" id="EMD-28915"/>
<dbReference type="EMDB" id="EMD-31106"/>
<dbReference type="EMDB" id="EMD-31217"/>
<dbReference type="EMDB" id="EMD-31925"/>
<dbReference type="EMDB" id="EMD-31926"/>
<dbReference type="EMDB" id="EMD-33171"/>
<dbReference type="EMDB" id="EMD-33172"/>
<dbReference type="EMDB" id="EMD-33173"/>
<dbReference type="EMDB" id="EMD-33174"/>
<dbReference type="EMDB" id="EMD-33175"/>
<dbReference type="EMDB" id="EMD-33176"/>
<dbReference type="EMDB" id="EMD-33177"/>
<dbReference type="EMDB" id="EMD-33322"/>
<dbReference type="EMDB" id="EMD-33385"/>
<dbReference type="EMDB" id="EMD-34195"/>
<dbReference type="EMDB" id="EMD-40522"/>
<dbReference type="EMDB" id="EMD-40789"/>
<dbReference type="EMDB" id="EMD-41011"/>
<dbReference type="EMDB" id="EMD-41015"/>
<dbReference type="EMDB" id="EMD-41016"/>
<dbReference type="EMDB" id="EMD-41110"/>
<dbReference type="EMDB" id="EMD-41146"/>
<dbReference type="EMDB" id="EMD-42977"/>
<dbReference type="EMDB" id="EMD-43000"/>
<dbReference type="EMDB" id="EMD-43001"/>
<dbReference type="EMDB" id="EMD-43002"/>
<dbReference type="EMDB" id="EMD-43003"/>
<dbReference type="EMDB" id="EMD-43004"/>
<dbReference type="EMDB" id="EMD-43005"/>
<dbReference type="EMDB" id="EMD-4318"/>
<dbReference type="EMDB" id="EMD-4336"/>
<dbReference type="EMDB" id="EMD-4429"/>
<dbReference type="EMDB" id="EMD-46728"/>
<dbReference type="EMDB" id="EMD-46732"/>
<dbReference type="EMDB" id="EMD-46733"/>
<dbReference type="EMDB" id="EMD-46771"/>
<dbReference type="EMDB" id="EMD-46822"/>
<dbReference type="EMDB" id="EMD-46823"/>
<dbReference type="EMDB" id="EMD-4704"/>
<dbReference type="EMDB" id="EMD-4710"/>
<dbReference type="EMDB" id="EMD-47412"/>
<dbReference type="EMDB" id="EMD-47413"/>
<dbReference type="EMDB" id="EMD-47414"/>
<dbReference type="EMDB" id="EMD-47415"/>
<dbReference type="EMDB" id="EMD-47416"/>
<dbReference type="EMDB" id="EMD-47417"/>
<dbReference type="EMDB" id="EMD-47418"/>
<dbReference type="EMDB" id="EMD-47421"/>
<dbReference type="EMDB" id="EMD-47422"/>
<dbReference type="EMDB" id="EMD-47423"/>
<dbReference type="EMDB" id="EMD-47425"/>
<dbReference type="EMDB" id="EMD-47428"/>
<dbReference type="EMDB" id="EMD-48039"/>
<dbReference type="EMDB" id="EMD-48040"/>
<dbReference type="EMDB" id="EMD-48041"/>
<dbReference type="EMDB" id="EMD-48042"/>
<dbReference type="EMDB" id="EMD-48043"/>
<dbReference type="EMDB" id="EMD-48044"/>
<dbReference type="EMDB" id="EMD-51238"/>
<dbReference type="EMDB" id="EMD-51241"/>
<dbReference type="EMDB" id="EMD-51244"/>
<dbReference type="EMDB" id="EMD-51247"/>
<dbReference type="EMDB" id="EMD-9356"/>
<dbReference type="EMDB" id="EMD-9384"/>
<dbReference type="SASBDB" id="P06897"/>
<dbReference type="SMR" id="P06897"/>
<dbReference type="BioGRID" id="592527">
    <property type="interactions" value="8"/>
</dbReference>
<dbReference type="DIP" id="DIP-39144N"/>
<dbReference type="IntAct" id="P06897">
    <property type="interactions" value="17"/>
</dbReference>
<dbReference type="DNASU" id="734746"/>
<dbReference type="GeneID" id="121402226"/>
<dbReference type="GeneID" id="121402234"/>
<dbReference type="GeneID" id="121402235"/>
<dbReference type="GeneID" id="121402245"/>
<dbReference type="GeneID" id="121402246"/>
<dbReference type="GeneID" id="121402256"/>
<dbReference type="GeneID" id="121402257"/>
<dbReference type="GeneID" id="121402258"/>
<dbReference type="GeneID" id="121402272"/>
<dbReference type="GeneID" id="121402273"/>
<dbReference type="GeneID" id="734746"/>
<dbReference type="KEGG" id="xla:734746"/>
<dbReference type="AGR" id="Xenbase:XB-GENE-6493983"/>
<dbReference type="CTD" id="734746"/>
<dbReference type="Xenbase" id="XB-GENE-6493983">
    <property type="gene designation" value="h2ax.S"/>
</dbReference>
<dbReference type="OrthoDB" id="9948295at2759"/>
<dbReference type="EvolutionaryTrace" id="P06897"/>
<dbReference type="Proteomes" id="UP000186698">
    <property type="component" value="Chromosome 3S"/>
</dbReference>
<dbReference type="Bgee" id="734746">
    <property type="expression patterns" value="Expressed in oocyte and 19 other cell types or tissues"/>
</dbReference>
<dbReference type="GO" id="GO:0000786">
    <property type="term" value="C:nucleosome"/>
    <property type="evidence" value="ECO:0000318"/>
    <property type="project" value="GO_Central"/>
</dbReference>
<dbReference type="GO" id="GO:0005634">
    <property type="term" value="C:nucleus"/>
    <property type="evidence" value="ECO:0000318"/>
    <property type="project" value="GO_Central"/>
</dbReference>
<dbReference type="GO" id="GO:0003677">
    <property type="term" value="F:DNA binding"/>
    <property type="evidence" value="ECO:0007669"/>
    <property type="project" value="UniProtKB-KW"/>
</dbReference>
<dbReference type="GO" id="GO:0046982">
    <property type="term" value="F:protein heterodimerization activity"/>
    <property type="evidence" value="ECO:0007669"/>
    <property type="project" value="InterPro"/>
</dbReference>
<dbReference type="GO" id="GO:0030527">
    <property type="term" value="F:structural constituent of chromatin"/>
    <property type="evidence" value="ECO:0000318"/>
    <property type="project" value="GO_Central"/>
</dbReference>
<dbReference type="GO" id="GO:0031507">
    <property type="term" value="P:heterochromatin formation"/>
    <property type="evidence" value="ECO:0000318"/>
    <property type="project" value="GO_Central"/>
</dbReference>
<dbReference type="CDD" id="cd00074">
    <property type="entry name" value="HFD_H2A"/>
    <property type="match status" value="1"/>
</dbReference>
<dbReference type="FunFam" id="1.10.20.10:FF:000103">
    <property type="entry name" value="Histone H2A type 1"/>
    <property type="match status" value="1"/>
</dbReference>
<dbReference type="Gene3D" id="1.10.20.10">
    <property type="entry name" value="Histone, subunit A"/>
    <property type="match status" value="1"/>
</dbReference>
<dbReference type="IDEAL" id="IID50139"/>
<dbReference type="InterPro" id="IPR009072">
    <property type="entry name" value="Histone-fold"/>
</dbReference>
<dbReference type="InterPro" id="IPR002119">
    <property type="entry name" value="Histone_H2A"/>
</dbReference>
<dbReference type="InterPro" id="IPR007125">
    <property type="entry name" value="Histone_H2A/H2B/H3"/>
</dbReference>
<dbReference type="InterPro" id="IPR032454">
    <property type="entry name" value="Histone_H2A_C"/>
</dbReference>
<dbReference type="InterPro" id="IPR032458">
    <property type="entry name" value="Histone_H2A_CS"/>
</dbReference>
<dbReference type="PANTHER" id="PTHR23430">
    <property type="entry name" value="HISTONE H2A"/>
    <property type="match status" value="1"/>
</dbReference>
<dbReference type="Pfam" id="PF00125">
    <property type="entry name" value="Histone"/>
    <property type="match status" value="1"/>
</dbReference>
<dbReference type="Pfam" id="PF16211">
    <property type="entry name" value="Histone_H2A_C"/>
    <property type="match status" value="1"/>
</dbReference>
<dbReference type="PRINTS" id="PR00620">
    <property type="entry name" value="HISTONEH2A"/>
</dbReference>
<dbReference type="SMART" id="SM00414">
    <property type="entry name" value="H2A"/>
    <property type="match status" value="1"/>
</dbReference>
<dbReference type="SUPFAM" id="SSF47113">
    <property type="entry name" value="Histone-fold"/>
    <property type="match status" value="1"/>
</dbReference>
<dbReference type="PROSITE" id="PS00046">
    <property type="entry name" value="HISTONE_H2A"/>
    <property type="match status" value="1"/>
</dbReference>
<organism>
    <name type="scientific">Xenopus laevis</name>
    <name type="common">African clawed frog</name>
    <dbReference type="NCBI Taxonomy" id="8355"/>
    <lineage>
        <taxon>Eukaryota</taxon>
        <taxon>Metazoa</taxon>
        <taxon>Chordata</taxon>
        <taxon>Craniata</taxon>
        <taxon>Vertebrata</taxon>
        <taxon>Euteleostomi</taxon>
        <taxon>Amphibia</taxon>
        <taxon>Batrachia</taxon>
        <taxon>Anura</taxon>
        <taxon>Pipoidea</taxon>
        <taxon>Pipidae</taxon>
        <taxon>Xenopodinae</taxon>
        <taxon>Xenopus</taxon>
        <taxon>Xenopus</taxon>
    </lineage>
</organism>
<comment type="function">
    <text>Core component of nucleosome. Nucleosomes wrap and compact DNA into chromatin, limiting DNA accessibility to the cellular machineries which require DNA as a template. Histones thereby play a central role in transcription regulation, DNA repair, DNA replication and chromosomal stability. DNA accessibility is regulated via a complex set of post-translational modifications of histones, also called histone code, and nucleosome remodeling.</text>
</comment>
<comment type="subunit">
    <text>The nucleosome is a histone octamer containing two molecules each of H2A, H2B, H3 and H4 assembled in one H3-H4 heterotetramer and two H2A-H2B heterodimers. The octamer wraps approximately 147 bp of DNA.</text>
</comment>
<comment type="subcellular location">
    <subcellularLocation>
        <location>Nucleus</location>
    </subcellularLocation>
    <subcellularLocation>
        <location>Chromosome</location>
    </subcellularLocation>
</comment>
<comment type="PTM">
    <text evidence="1">Monoubiquitination of Lys-120 (H2AK119Ub) gives a specific tag for epigenetic transcriptional repression. Following DNA double-strand breaks (DSBs), it is ubiquitinated through 'Lys-63' linkage of ubiquitin moieties, leading to the recruitment of repair proteins to sites of DNA damage. H2AK119Ub and ionizing radiation-induced 'Lys-63'-linked ubiquitination are distinct events (By similarity).</text>
</comment>
<comment type="PTM">
    <text evidence="1">Phosphorylation on Ser-2 is enhanced during mitosis. Phosphorylation on Ser-2 directly represses transcription (By similarity).</text>
</comment>
<comment type="PTM">
    <text evidence="1">Glutamine methylation at Gln-105 (H2AQ104me) by FBL is specifically dedicated to polymerase I. It is present at 35S ribosomal DNA locus and impairs binding of the FACT complex (By similarity).</text>
</comment>
<comment type="similarity">
    <text evidence="5">Belongs to the histone H2A family.</text>
</comment>
<feature type="initiator methionine" description="Removed">
    <location>
        <position position="1"/>
    </location>
</feature>
<feature type="chain" id="PRO_0000055294" description="Histone H2A type 1">
    <location>
        <begin position="2"/>
        <end position="130"/>
    </location>
</feature>
<feature type="region of interest" description="Disordered" evidence="4">
    <location>
        <begin position="1"/>
        <end position="22"/>
    </location>
</feature>
<feature type="compositionally biased region" description="Basic residues" evidence="4">
    <location>
        <begin position="7"/>
        <end position="19"/>
    </location>
</feature>
<feature type="modified residue" description="N-acetylserine" evidence="1">
    <location>
        <position position="2"/>
    </location>
</feature>
<feature type="modified residue" description="Phosphoserine" evidence="1">
    <location>
        <position position="2"/>
    </location>
</feature>
<feature type="modified residue" description="N6-(2-hydroxyisobutyryl)lysine" evidence="3">
    <location>
        <position position="6"/>
    </location>
</feature>
<feature type="modified residue" description="N6-acetyllysine" evidence="1">
    <location>
        <position position="6"/>
    </location>
</feature>
<feature type="modified residue" description="N6-(2-hydroxyisobutyryl)lysine; alternate" evidence="3">
    <location>
        <position position="10"/>
    </location>
</feature>
<feature type="modified residue" description="N6-lactoyllysine; alternate" evidence="2">
    <location>
        <position position="10"/>
    </location>
</feature>
<feature type="modified residue" description="N6-succinyllysine" evidence="3">
    <location>
        <position position="10"/>
    </location>
</feature>
<feature type="modified residue" description="N6-(2-hydroxyisobutyryl)lysine; alternate" evidence="3">
    <location>
        <position position="37"/>
    </location>
</feature>
<feature type="modified residue" description="N6-(2-hydroxyisobutyryl)lysine" evidence="3">
    <location>
        <position position="75"/>
    </location>
</feature>
<feature type="modified residue" description="N6-(2-hydroxyisobutyryl)lysine" evidence="3">
    <location>
        <position position="76"/>
    </location>
</feature>
<feature type="modified residue" description="N6-(2-hydroxyisobutyryl)lysine; alternate" evidence="3">
    <location>
        <position position="96"/>
    </location>
</feature>
<feature type="modified residue" description="N6-glutaryllysine; alternate" evidence="3">
    <location>
        <position position="96"/>
    </location>
</feature>
<feature type="modified residue" description="N6-succinyllysine" evidence="3">
    <location>
        <position position="96"/>
    </location>
</feature>
<feature type="modified residue" description="N5-methylglutamine" evidence="1">
    <location>
        <position position="105"/>
    </location>
</feature>
<feature type="modified residue" description="N6-(2-hydroxyisobutyryl)lysine; alternate" evidence="3">
    <location>
        <position position="119"/>
    </location>
</feature>
<feature type="modified residue" description="N6-glutaryllysine; alternate" evidence="3">
    <location>
        <position position="119"/>
    </location>
</feature>
<feature type="cross-link" description="Glycyl lysine isopeptide (Lys-Gly) (interchain with G-Cter in ubiquitin)" evidence="1">
    <location>
        <position position="14"/>
    </location>
</feature>
<feature type="cross-link" description="Glycyl lysine isopeptide (Lys-Gly) (interchain with G-Cter in ubiquitin)" evidence="1">
    <location>
        <position position="16"/>
    </location>
</feature>
<feature type="cross-link" description="Glycyl lysine isopeptide (Lys-Gly) (interchain with G-Cter in ubiquitin)" evidence="1">
    <location>
        <position position="120"/>
    </location>
</feature>
<feature type="helix" evidence="14">
    <location>
        <begin position="6"/>
        <end position="8"/>
    </location>
</feature>
<feature type="strand" evidence="14">
    <location>
        <begin position="9"/>
        <end position="13"/>
    </location>
</feature>
<feature type="helix" evidence="17">
    <location>
        <begin position="18"/>
        <end position="21"/>
    </location>
</feature>
<feature type="helix" evidence="17">
    <location>
        <begin position="28"/>
        <end position="37"/>
    </location>
</feature>
<feature type="strand" evidence="17">
    <location>
        <begin position="40"/>
        <end position="44"/>
    </location>
</feature>
<feature type="helix" evidence="17">
    <location>
        <begin position="47"/>
        <end position="73"/>
    </location>
</feature>
<feature type="strand" evidence="17">
    <location>
        <begin position="77"/>
        <end position="79"/>
    </location>
</feature>
<feature type="helix" evidence="17">
    <location>
        <begin position="81"/>
        <end position="89"/>
    </location>
</feature>
<feature type="helix" evidence="17">
    <location>
        <begin position="92"/>
        <end position="97"/>
    </location>
</feature>
<feature type="turn" evidence="16">
    <location>
        <begin position="98"/>
        <end position="100"/>
    </location>
</feature>
<feature type="strand" evidence="16">
    <location>
        <begin position="101"/>
        <end position="103"/>
    </location>
</feature>
<feature type="helix" evidence="16">
    <location>
        <begin position="114"/>
        <end position="116"/>
    </location>
</feature>
<feature type="strand" evidence="15">
    <location>
        <begin position="117"/>
        <end position="119"/>
    </location>
</feature>
<feature type="helix" evidence="16">
    <location>
        <begin position="120"/>
        <end position="122"/>
    </location>
</feature>
<feature type="turn" evidence="16">
    <location>
        <begin position="124"/>
        <end position="126"/>
    </location>
</feature>
<evidence type="ECO:0000250" key="1"/>
<evidence type="ECO:0000250" key="2">
    <source>
        <dbReference type="UniProtKB" id="P0C0S5"/>
    </source>
</evidence>
<evidence type="ECO:0000250" key="3">
    <source>
        <dbReference type="UniProtKB" id="P0C0S8"/>
    </source>
</evidence>
<evidence type="ECO:0000256" key="4">
    <source>
        <dbReference type="SAM" id="MobiDB-lite"/>
    </source>
</evidence>
<evidence type="ECO:0000305" key="5"/>
<evidence type="ECO:0007744" key="6">
    <source>
        <dbReference type="PDB" id="6N1Z"/>
    </source>
</evidence>
<evidence type="ECO:0007744" key="7">
    <source>
        <dbReference type="PDB" id="6WZ5"/>
    </source>
</evidence>
<evidence type="ECO:0007744" key="8">
    <source>
        <dbReference type="PDB" id="6WZ9"/>
    </source>
</evidence>
<evidence type="ECO:0007744" key="9">
    <source>
        <dbReference type="PDB" id="6X0N"/>
    </source>
</evidence>
<evidence type="ECO:0007744" key="10">
    <source>
        <dbReference type="PDB" id="6ZHX"/>
    </source>
</evidence>
<evidence type="ECO:0007744" key="11">
    <source>
        <dbReference type="PDB" id="6ZHY"/>
    </source>
</evidence>
<evidence type="ECO:0007744" key="12">
    <source>
        <dbReference type="PDB" id="7ENN"/>
    </source>
</evidence>
<evidence type="ECO:0007744" key="13">
    <source>
        <dbReference type="PDB" id="7OTQ"/>
    </source>
</evidence>
<evidence type="ECO:0007829" key="14">
    <source>
        <dbReference type="PDB" id="1AOI"/>
    </source>
</evidence>
<evidence type="ECO:0007829" key="15">
    <source>
        <dbReference type="PDB" id="1KX3"/>
    </source>
</evidence>
<evidence type="ECO:0007829" key="16">
    <source>
        <dbReference type="PDB" id="1KX5"/>
    </source>
</evidence>
<evidence type="ECO:0007829" key="17">
    <source>
        <dbReference type="PDB" id="6W4L"/>
    </source>
</evidence>
<keyword id="KW-0002">3D-structure</keyword>
<keyword id="KW-0007">Acetylation</keyword>
<keyword id="KW-0158">Chromosome</keyword>
<keyword id="KW-0238">DNA-binding</keyword>
<keyword id="KW-0379">Hydroxylation</keyword>
<keyword id="KW-1017">Isopeptide bond</keyword>
<keyword id="KW-0488">Methylation</keyword>
<keyword id="KW-0544">Nucleosome core</keyword>
<keyword id="KW-0539">Nucleus</keyword>
<keyword id="KW-0597">Phosphoprotein</keyword>
<keyword id="KW-1185">Reference proteome</keyword>
<keyword id="KW-0832">Ubl conjugation</keyword>
<name>H2A1_XENLA</name>
<accession>P06897</accession>
<accession>Q3B8I8</accession>
<proteinExistence type="evidence at protein level"/>
<reference key="1">
    <citation type="journal article" date="1985" name="J. Mol. Biol.">
        <title>Genomic organization and nucleotide sequence of two distinct histone gene clusters from Xenopus laevis. Identification of novel conserved upstream sequence elements.</title>
        <authorList>
            <person name="Perry M."/>
            <person name="Thomsen G.H."/>
            <person name="Roeder R.G."/>
        </authorList>
    </citation>
    <scope>NUCLEOTIDE SEQUENCE [GENOMIC DNA] (GENE CLUSTER X1H3)</scope>
</reference>
<reference key="2">
    <citation type="submission" date="2005-10" db="EMBL/GenBank/DDBJ databases">
        <authorList>
            <consortium name="NIH - Xenopus Gene Collection (XGC) project"/>
        </authorList>
    </citation>
    <scope>NUCLEOTIDE SEQUENCE [LARGE SCALE MRNA]</scope>
    <source>
        <tissue>Testis</tissue>
    </source>
</reference>
<reference key="3">
    <citation type="journal article" date="1997" name="Nature">
        <title>Crystal structure of the nucleosome core particle at 2.8 A resolution.</title>
        <authorList>
            <person name="Luger K."/>
            <person name="Mader A.W."/>
            <person name="Richmond R.K."/>
            <person name="Sargent D.F."/>
            <person name="Richmond T.J."/>
        </authorList>
    </citation>
    <scope>X-RAY CRYSTALLOGRAPHY (2.8 ANGSTROMS)</scope>
</reference>
<reference evidence="7 8 9" key="4">
    <citation type="journal article" date="2020" name="Nature">
        <title>Bridging of DNA breaks activates PARP2-HPF1 to modify chromatin.</title>
        <authorList>
            <person name="Bilokapic S."/>
            <person name="Suskiewicz M.J."/>
            <person name="Ahel I."/>
            <person name="Halic M."/>
        </authorList>
    </citation>
    <scope>STRUCTURE BY ELECTRON MICROSCOPY (2.20 ANGSTROMS) OF 2-130 OF NUCLEOSOME CORE COMPLEX IN COMPLEX WITH PARP2 AND HPF1</scope>
</reference>
<reference evidence="6" key="5">
    <citation type="journal article" date="2019" name="Elife">
        <title>Importin-9 wraps around the H2A-H2B core to act as nuclear importer and histone chaperone.</title>
        <authorList>
            <person name="Padavannil A."/>
            <person name="Sarkar P."/>
            <person name="Kim S.J."/>
            <person name="Cagatay T."/>
            <person name="Jiou J."/>
            <person name="Brautigam C.A."/>
            <person name="Tomchick D.R."/>
            <person name="Sali A."/>
            <person name="D'Arcy S."/>
            <person name="Chook Y.M."/>
        </authorList>
    </citation>
    <scope>X-RAY CRYSTALLOGRAPHY (2.70 ANGSTROMS)</scope>
</reference>
<reference evidence="10 11" key="6">
    <citation type="journal article" date="2020" name="Cell Rep.">
        <title>Mechanistic insights into regulation of the ALC1 remodeler by the nucleosome acidic patch.</title>
        <authorList>
            <person name="Lehmann L.C."/>
            <person name="Bacic L."/>
            <person name="Hewitt G."/>
            <person name="Brackmann K."/>
            <person name="Sabantsev A."/>
            <person name="Gaullier G."/>
            <person name="Pytharopoulou S."/>
            <person name="Degliesposti G."/>
            <person name="Okkenhaug H."/>
            <person name="Tan S."/>
            <person name="Costa A."/>
            <person name="Skehel J.M."/>
            <person name="Boulton S.J."/>
            <person name="Deindl S."/>
        </authorList>
    </citation>
    <scope>STRUCTURE BY ELECTRON MICROSCOPY (2.50 ANGSTROMS) OF NUCLEOSOME CORE COMPLEX IN COMPLEX WITH CHD1L</scope>
</reference>
<reference evidence="13" key="7">
    <citation type="journal article" date="2021" name="Elife">
        <title>Structure and dynamics of the chromatin remodeler ALC1 bound to a PARylated nucleosome.</title>
        <authorList>
            <person name="Bacic L."/>
            <person name="Gaullier G."/>
            <person name="Sabantsev A."/>
            <person name="Lehmann L.C."/>
            <person name="Brackmann K."/>
            <person name="Dimakou D."/>
            <person name="Halic M."/>
            <person name="Hewitt G."/>
            <person name="Boulton S.J."/>
            <person name="Deindl S."/>
        </authorList>
    </citation>
    <scope>STRUCTURE BY ELECTRON MICROSCOPY (4.80 ANGSTROMS) OF NUCLEOSOME CORE COMPLEX IN COMPLEX WITH CHD1L</scope>
</reference>
<reference evidence="12" key="8">
    <citation type="journal article" date="2021" name="Nat. Commun.">
        <title>Structural basis of ALC1/CHD1L autoinhibition and the mechanism of activation by the nucleosome.</title>
        <authorList>
            <person name="Wang L."/>
            <person name="Chen K."/>
            <person name="Chen Z."/>
        </authorList>
    </citation>
    <scope>STRUCTURE BY ELECTRON MICROSCOPY (2.80 ANGSTROMS) OF 2-130 OF NUCLEOSOME CORE COMPLEX IN COMPLEX WITH CHD1L</scope>
</reference>
<protein>
    <recommendedName>
        <fullName>Histone H2A type 1</fullName>
    </recommendedName>
</protein>